<sequence length="1376" mass="153435">MAGRPTGGPQGAPSHDLLLDLENDQPVYGGGQRSTLNDDDLMRTYTRDQESGQDQGRPSVSYDDFIGAGQSRQHGTGSQPGGPGQSSSSNNNNNNNVSAPYSRSGRQYSQTSDLGNYQRYADDFDDYPADGDSFYQQGGALNGGGADAAARHNARNRNSVLTMGGGFFGKMKNRLGMGQGYSEMDLPLTEPGGGGGGAGGGGHSRADSSGIDPPKRDKKFDMGNFKFGFGRSKPDPSTLGPRIIHLNNPPANAANKYVNNHVSTAKYNIATFLPKFLLEQFSKIANVFFLFTAALQQIPGLSPTNRFTTIIPLVAVLMVSAGKELVEDYRRKQADAALNTSRAQVLRGSTFEETKWINVAVGDIVRVESEEPFPADIVLLASSEPEGLCYIETANLDGETNLKIKQALPETSQMVSSSELSRLGGRMKSEQPNSSLYTYEATLTMQTGGGEKELPLNPEQLLLRGATLRNTPWIHGVVVFTGHETKLMRNATAAPIKRTKVEKKLNTLVLLLVGILMVLSIISTVGDLIIRRVEGDAISYLMLDQPDTAGKIAETFFKDMVTYWVLFSSLVPISLFVTVEMVKYWHGILINDDLDMYYDRNDTPANCRTSNLVEELGMVEFVFSDKTGTLTCNMMEFKQASIAGIQYADEVPEDRRATIQDGVEVGLHDYKRLKENRKNHSSAPAIDHFLALLATCHTVIPEKGDEKGGKIKYQAASPDEGALVDGAATLGYTFTDRKPKAVFIEVDGQTLEYELLAVCEFNSTRKRMSTIYRCPDGVIRVYCKGADTVILERLNENNPHVEQTLTHLEEYASEGLRTLCLAMREVSEQEFQEWNQVYEKAATTVGGNRAEELDKASEMIEHDFFLLGATAIEDRLQDGVPETIHTLQEANIKVWVLTGDRQETAINIGMSCKLLSEEMMLLIINEESAAATRDNIEKKLEAIRAQGDRTIELETLALVIDGKSLTYALEKDLEKMFLDLAIMCKAVICCRVSPLQKALVVKLVKKYQKESILLAIGDGANDVSMIQAAHIGVGISGEEGLQAARSADVSIAQFRFLKKLLLVHGAWSYQRVAKTILYSFYKNITLYMTQFWYTFRNVFSGAVIYESWTLTFYNVFYTVLPPLALGILDQFISARLLDRYPQLYSMGQQNQFFRMKVFIEWLLNAVYHSIILYVFGELIWHGDLILENGQIAGHWMWGTALYAPVLLTVLGKAGLVTSNWTKYHVIAIPGSMAIWWIFIAVYGTVAPMIPFSPEFHGIVPKLYSSPIFWLQSFALAILCLLRDFAWKYAKRMYRPESYHHIQEIQKYNIQDYRPRMEQFQKAIRKVRQVQRMRKQRGYAFSQADESQARVLQAYDTTQNRGRYGEMTSSRPQGQGT</sequence>
<reference evidence="14" key="1">
    <citation type="journal article" date="2011" name="PLoS Pathog.">
        <title>Comparative genomics yields insights into niche adaptation of plant vascular wilt pathogens.</title>
        <authorList>
            <person name="Klosterman S.J."/>
            <person name="Subbarao K.V."/>
            <person name="Kang S."/>
            <person name="Veronese P."/>
            <person name="Gold S.E."/>
            <person name="Thomma B.P.H.J."/>
            <person name="Chen Z."/>
            <person name="Henrissat B."/>
            <person name="Lee Y.-H."/>
            <person name="Park J."/>
            <person name="Garcia-Pedrajas M.D."/>
            <person name="Barbara D.J."/>
            <person name="Anchieta A."/>
            <person name="de Jonge R."/>
            <person name="Santhanam P."/>
            <person name="Maruthachalam K."/>
            <person name="Atallah Z."/>
            <person name="Amyotte S.G."/>
            <person name="Paz Z."/>
            <person name="Inderbitzin P."/>
            <person name="Hayes R.J."/>
            <person name="Heiman D.I."/>
            <person name="Young S."/>
            <person name="Zeng Q."/>
            <person name="Engels R."/>
            <person name="Galagan J."/>
            <person name="Cuomo C.A."/>
            <person name="Dobinson K.F."/>
            <person name="Ma L.-J."/>
        </authorList>
    </citation>
    <scope>NUCLEOTIDE SEQUENCE [LARGE SCALE GENOMIC DNA]</scope>
    <source>
        <strain evidence="14">VdLs.17 / ATCC MYA-4575 / FGSC 10137</strain>
    </source>
</reference>
<reference evidence="12" key="2">
    <citation type="journal article" date="2022" name="Front. Plant Sci.">
        <title>Loss of function of VdDrs2, a P4-ATPase, impairs the toxin secretion and microsclerotia formation, and decreases the pathogenicity of Verticillium dahliae.</title>
        <authorList>
            <person name="Ren H."/>
            <person name="Li X."/>
            <person name="Li Y."/>
            <person name="Li M."/>
            <person name="Sun J."/>
            <person name="Wang F."/>
            <person name="Zeng J."/>
            <person name="Chen Y."/>
            <person name="Wang L."/>
            <person name="Yan X."/>
            <person name="Fan Y."/>
            <person name="Jin D."/>
            <person name="Pei Y."/>
        </authorList>
    </citation>
    <scope>FUNCTION</scope>
    <scope>DISRUPTION PHENOTYPE</scope>
    <source>
        <strain evidence="11">991</strain>
    </source>
</reference>
<dbReference type="EC" id="7.6.2.1" evidence="4"/>
<dbReference type="EMBL" id="DS572706">
    <property type="protein sequence ID" value="EGY15084.1"/>
    <property type="molecule type" value="Genomic_DNA"/>
</dbReference>
<dbReference type="RefSeq" id="XP_009657247.1">
    <property type="nucleotide sequence ID" value="XM_009658952.1"/>
</dbReference>
<dbReference type="SMR" id="G2X7W6"/>
<dbReference type="FunCoup" id="G2X7W6">
    <property type="interactions" value="287"/>
</dbReference>
<dbReference type="STRING" id="498257.G2X7W6"/>
<dbReference type="EnsemblFungi" id="EGY15084">
    <property type="protein sequence ID" value="EGY15084"/>
    <property type="gene ID" value="VDAG_06574"/>
</dbReference>
<dbReference type="GeneID" id="20708037"/>
<dbReference type="KEGG" id="vda:VDAG_06574"/>
<dbReference type="eggNOG" id="KOG0206">
    <property type="taxonomic scope" value="Eukaryota"/>
</dbReference>
<dbReference type="HOGENOM" id="CLU_000846_3_0_1"/>
<dbReference type="InParanoid" id="G2X7W6"/>
<dbReference type="OMA" id="MHSFWSW"/>
<dbReference type="OrthoDB" id="36409at1028384"/>
<dbReference type="PHI-base" id="PHI:123509"/>
<dbReference type="PHI-base" id="PHI:123510"/>
<dbReference type="Proteomes" id="UP000001611">
    <property type="component" value="Chromosome 8"/>
</dbReference>
<dbReference type="GO" id="GO:0005886">
    <property type="term" value="C:plasma membrane"/>
    <property type="evidence" value="ECO:0000314"/>
    <property type="project" value="UniProtKB"/>
</dbReference>
<dbReference type="GO" id="GO:0032588">
    <property type="term" value="C:trans-Golgi network membrane"/>
    <property type="evidence" value="ECO:0000314"/>
    <property type="project" value="UniProtKB"/>
</dbReference>
<dbReference type="GO" id="GO:0005524">
    <property type="term" value="F:ATP binding"/>
    <property type="evidence" value="ECO:0007669"/>
    <property type="project" value="UniProtKB-KW"/>
</dbReference>
<dbReference type="GO" id="GO:0016887">
    <property type="term" value="F:ATP hydrolysis activity"/>
    <property type="evidence" value="ECO:0007669"/>
    <property type="project" value="InterPro"/>
</dbReference>
<dbReference type="GO" id="GO:0000287">
    <property type="term" value="F:magnesium ion binding"/>
    <property type="evidence" value="ECO:0007669"/>
    <property type="project" value="InterPro"/>
</dbReference>
<dbReference type="GO" id="GO:0090556">
    <property type="term" value="F:phosphatidylserine floppase activity"/>
    <property type="evidence" value="ECO:0007669"/>
    <property type="project" value="RHEA"/>
</dbReference>
<dbReference type="GO" id="GO:0032456">
    <property type="term" value="P:endocytic recycling"/>
    <property type="evidence" value="ECO:0007669"/>
    <property type="project" value="TreeGrafter"/>
</dbReference>
<dbReference type="GO" id="GO:0045332">
    <property type="term" value="P:phospholipid translocation"/>
    <property type="evidence" value="ECO:0007669"/>
    <property type="project" value="TreeGrafter"/>
</dbReference>
<dbReference type="GO" id="GO:0006892">
    <property type="term" value="P:post-Golgi vesicle-mediated transport"/>
    <property type="evidence" value="ECO:0007669"/>
    <property type="project" value="TreeGrafter"/>
</dbReference>
<dbReference type="CDD" id="cd02073">
    <property type="entry name" value="P-type_ATPase_APLT_Dnf-like"/>
    <property type="match status" value="1"/>
</dbReference>
<dbReference type="FunFam" id="2.70.150.10:FF:000026">
    <property type="entry name" value="Phospholipid-transporting ATPase"/>
    <property type="match status" value="1"/>
</dbReference>
<dbReference type="FunFam" id="3.40.1110.10:FF:000047">
    <property type="entry name" value="Phospholipid-transporting ATPase"/>
    <property type="match status" value="1"/>
</dbReference>
<dbReference type="FunFam" id="3.40.50.1000:FF:000010">
    <property type="entry name" value="Phospholipid-transporting ATPase"/>
    <property type="match status" value="1"/>
</dbReference>
<dbReference type="Gene3D" id="3.40.1110.10">
    <property type="entry name" value="Calcium-transporting ATPase, cytoplasmic domain N"/>
    <property type="match status" value="1"/>
</dbReference>
<dbReference type="Gene3D" id="2.70.150.10">
    <property type="entry name" value="Calcium-transporting ATPase, cytoplasmic transduction domain A"/>
    <property type="match status" value="1"/>
</dbReference>
<dbReference type="Gene3D" id="3.40.50.1000">
    <property type="entry name" value="HAD superfamily/HAD-like"/>
    <property type="match status" value="1"/>
</dbReference>
<dbReference type="InterPro" id="IPR023299">
    <property type="entry name" value="ATPase_P-typ_cyto_dom_N"/>
</dbReference>
<dbReference type="InterPro" id="IPR018303">
    <property type="entry name" value="ATPase_P-typ_P_site"/>
</dbReference>
<dbReference type="InterPro" id="IPR023298">
    <property type="entry name" value="ATPase_P-typ_TM_dom_sf"/>
</dbReference>
<dbReference type="InterPro" id="IPR008250">
    <property type="entry name" value="ATPase_P-typ_transduc_dom_A_sf"/>
</dbReference>
<dbReference type="InterPro" id="IPR036412">
    <property type="entry name" value="HAD-like_sf"/>
</dbReference>
<dbReference type="InterPro" id="IPR023214">
    <property type="entry name" value="HAD_sf"/>
</dbReference>
<dbReference type="InterPro" id="IPR006539">
    <property type="entry name" value="P-type_ATPase_IV"/>
</dbReference>
<dbReference type="InterPro" id="IPR032631">
    <property type="entry name" value="P-type_ATPase_N"/>
</dbReference>
<dbReference type="InterPro" id="IPR001757">
    <property type="entry name" value="P_typ_ATPase"/>
</dbReference>
<dbReference type="InterPro" id="IPR032630">
    <property type="entry name" value="P_typ_ATPase_c"/>
</dbReference>
<dbReference type="InterPro" id="IPR044492">
    <property type="entry name" value="P_typ_ATPase_HD_dom"/>
</dbReference>
<dbReference type="NCBIfam" id="TIGR01652">
    <property type="entry name" value="ATPase-Plipid"/>
    <property type="match status" value="1"/>
</dbReference>
<dbReference type="NCBIfam" id="TIGR01494">
    <property type="entry name" value="ATPase_P-type"/>
    <property type="match status" value="1"/>
</dbReference>
<dbReference type="PANTHER" id="PTHR24092:SF150">
    <property type="entry name" value="PHOSPHOLIPID-TRANSPORTING ATPASE"/>
    <property type="match status" value="1"/>
</dbReference>
<dbReference type="PANTHER" id="PTHR24092">
    <property type="entry name" value="PROBABLE PHOSPHOLIPID-TRANSPORTING ATPASE"/>
    <property type="match status" value="1"/>
</dbReference>
<dbReference type="Pfam" id="PF13246">
    <property type="entry name" value="Cation_ATPase"/>
    <property type="match status" value="1"/>
</dbReference>
<dbReference type="Pfam" id="PF00122">
    <property type="entry name" value="E1-E2_ATPase"/>
    <property type="match status" value="1"/>
</dbReference>
<dbReference type="Pfam" id="PF16212">
    <property type="entry name" value="PhoLip_ATPase_C"/>
    <property type="match status" value="1"/>
</dbReference>
<dbReference type="Pfam" id="PF16209">
    <property type="entry name" value="PhoLip_ATPase_N"/>
    <property type="match status" value="1"/>
</dbReference>
<dbReference type="PRINTS" id="PR00119">
    <property type="entry name" value="CATATPASE"/>
</dbReference>
<dbReference type="SFLD" id="SFLDS00003">
    <property type="entry name" value="Haloacid_Dehalogenase"/>
    <property type="match status" value="1"/>
</dbReference>
<dbReference type="SFLD" id="SFLDF00027">
    <property type="entry name" value="p-type_atpase"/>
    <property type="match status" value="1"/>
</dbReference>
<dbReference type="SUPFAM" id="SSF81653">
    <property type="entry name" value="Calcium ATPase, transduction domain A"/>
    <property type="match status" value="1"/>
</dbReference>
<dbReference type="SUPFAM" id="SSF81665">
    <property type="entry name" value="Calcium ATPase, transmembrane domain M"/>
    <property type="match status" value="1"/>
</dbReference>
<dbReference type="SUPFAM" id="SSF56784">
    <property type="entry name" value="HAD-like"/>
    <property type="match status" value="1"/>
</dbReference>
<dbReference type="SUPFAM" id="SSF81660">
    <property type="entry name" value="Metal cation-transporting ATPase, ATP-binding domain N"/>
    <property type="match status" value="1"/>
</dbReference>
<dbReference type="PROSITE" id="PS00154">
    <property type="entry name" value="ATPASE_E1_E2"/>
    <property type="match status" value="1"/>
</dbReference>
<protein>
    <recommendedName>
        <fullName evidence="12">Phospholipid-transporting ATPase DRS2</fullName>
        <ecNumber evidence="4">7.6.2.1</ecNumber>
    </recommendedName>
    <alternativeName>
        <fullName evidence="11">VdDRS2</fullName>
    </alternativeName>
</protein>
<evidence type="ECO:0000250" key="1">
    <source>
        <dbReference type="UniProtKB" id="C7EXK4"/>
    </source>
</evidence>
<evidence type="ECO:0000250" key="2">
    <source>
        <dbReference type="UniProtKB" id="P04191"/>
    </source>
</evidence>
<evidence type="ECO:0000250" key="3">
    <source>
        <dbReference type="UniProtKB" id="P32660"/>
    </source>
</evidence>
<evidence type="ECO:0000250" key="4">
    <source>
        <dbReference type="UniProtKB" id="P39524"/>
    </source>
</evidence>
<evidence type="ECO:0000250" key="5">
    <source>
        <dbReference type="UniProtKB" id="Q8NB49"/>
    </source>
</evidence>
<evidence type="ECO:0000250" key="6">
    <source>
        <dbReference type="UniProtKB" id="Q9Y2Q0"/>
    </source>
</evidence>
<evidence type="ECO:0000255" key="7"/>
<evidence type="ECO:0000255" key="8">
    <source>
        <dbReference type="PROSITE-ProRule" id="PRU00498"/>
    </source>
</evidence>
<evidence type="ECO:0000256" key="9">
    <source>
        <dbReference type="SAM" id="MobiDB-lite"/>
    </source>
</evidence>
<evidence type="ECO:0000269" key="10">
    <source>
    </source>
</evidence>
<evidence type="ECO:0000303" key="11">
    <source>
    </source>
</evidence>
<evidence type="ECO:0000305" key="12"/>
<evidence type="ECO:0000312" key="13">
    <source>
        <dbReference type="EMBL" id="EGY15084.1"/>
    </source>
</evidence>
<evidence type="ECO:0000312" key="14">
    <source>
        <dbReference type="Proteomes" id="UP000001611"/>
    </source>
</evidence>
<keyword id="KW-0067">ATP-binding</keyword>
<keyword id="KW-1003">Cell membrane</keyword>
<keyword id="KW-0325">Glycoprotein</keyword>
<keyword id="KW-0333">Golgi apparatus</keyword>
<keyword id="KW-0460">Magnesium</keyword>
<keyword id="KW-0472">Membrane</keyword>
<keyword id="KW-0479">Metal-binding</keyword>
<keyword id="KW-0547">Nucleotide-binding</keyword>
<keyword id="KW-1185">Reference proteome</keyword>
<keyword id="KW-1278">Translocase</keyword>
<keyword id="KW-0812">Transmembrane</keyword>
<keyword id="KW-1133">Transmembrane helix</keyword>
<proteinExistence type="inferred from homology"/>
<name>ATC3_VERDV</name>
<feature type="chain" id="PRO_0000458215" description="Phospholipid-transporting ATPase DRS2">
    <location>
        <begin position="1"/>
        <end position="1376"/>
    </location>
</feature>
<feature type="topological domain" description="Cytoplasmic" evidence="12">
    <location>
        <begin position="1"/>
        <end position="306"/>
    </location>
</feature>
<feature type="transmembrane region" description="Helical" evidence="7">
    <location>
        <begin position="307"/>
        <end position="327"/>
    </location>
</feature>
<feature type="topological domain" description="Extracellular" evidence="12">
    <location>
        <begin position="328"/>
        <end position="509"/>
    </location>
</feature>
<feature type="transmembrane region" description="Helical" evidence="7">
    <location>
        <begin position="510"/>
        <end position="530"/>
    </location>
</feature>
<feature type="topological domain" description="Cytoplasmic" evidence="12">
    <location>
        <begin position="531"/>
        <end position="559"/>
    </location>
</feature>
<feature type="transmembrane region" description="Helical" evidence="7">
    <location>
        <begin position="560"/>
        <end position="580"/>
    </location>
</feature>
<feature type="topological domain" description="Extracellular" evidence="12">
    <location>
        <begin position="581"/>
        <end position="1107"/>
    </location>
</feature>
<feature type="transmembrane region" description="Helical" evidence="7">
    <location>
        <begin position="1108"/>
        <end position="1128"/>
    </location>
</feature>
<feature type="topological domain" description="Cytoplasmic" evidence="12">
    <location>
        <begin position="1129"/>
        <end position="1165"/>
    </location>
</feature>
<feature type="transmembrane region" description="Helical" evidence="7">
    <location>
        <begin position="1166"/>
        <end position="1186"/>
    </location>
</feature>
<feature type="topological domain" description="Extracellular" evidence="12">
    <location>
        <begin position="1187"/>
        <end position="1190"/>
    </location>
</feature>
<feature type="transmembrane region" description="Helical" evidence="7">
    <location>
        <begin position="1191"/>
        <end position="1211"/>
    </location>
</feature>
<feature type="topological domain" description="Cytoplasmic" evidence="12">
    <location>
        <begin position="1212"/>
        <end position="1224"/>
    </location>
</feature>
<feature type="transmembrane region" description="Helical" evidence="7">
    <location>
        <begin position="1225"/>
        <end position="1245"/>
    </location>
</feature>
<feature type="topological domain" description="Extracellular" evidence="12">
    <location>
        <begin position="1246"/>
        <end position="1257"/>
    </location>
</feature>
<feature type="transmembrane region" description="Helical" evidence="7">
    <location>
        <begin position="1258"/>
        <end position="1278"/>
    </location>
</feature>
<feature type="topological domain" description="Cytoplasmic" evidence="12">
    <location>
        <begin position="1279"/>
        <end position="1376"/>
    </location>
</feature>
<feature type="region of interest" description="Disordered" evidence="9">
    <location>
        <begin position="1"/>
        <end position="151"/>
    </location>
</feature>
<feature type="region of interest" description="Disordered" evidence="9">
    <location>
        <begin position="180"/>
        <end position="217"/>
    </location>
</feature>
<feature type="compositionally biased region" description="Gly residues" evidence="9">
    <location>
        <begin position="1"/>
        <end position="10"/>
    </location>
</feature>
<feature type="compositionally biased region" description="Basic and acidic residues" evidence="9">
    <location>
        <begin position="40"/>
        <end position="50"/>
    </location>
</feature>
<feature type="compositionally biased region" description="Low complexity" evidence="9">
    <location>
        <begin position="85"/>
        <end position="96"/>
    </location>
</feature>
<feature type="compositionally biased region" description="Polar residues" evidence="9">
    <location>
        <begin position="97"/>
        <end position="115"/>
    </location>
</feature>
<feature type="compositionally biased region" description="Gly residues" evidence="9">
    <location>
        <begin position="191"/>
        <end position="203"/>
    </location>
</feature>
<feature type="active site" description="4-aspartylphosphate intermediate" evidence="6">
    <location>
        <position position="625"/>
    </location>
</feature>
<feature type="binding site" evidence="6">
    <location>
        <position position="625"/>
    </location>
    <ligand>
        <name>ATP</name>
        <dbReference type="ChEBI" id="CHEBI:30616"/>
    </ligand>
</feature>
<feature type="binding site" evidence="6">
    <location>
        <position position="625"/>
    </location>
    <ligand>
        <name>Mg(2+)</name>
        <dbReference type="ChEBI" id="CHEBI:18420"/>
    </ligand>
</feature>
<feature type="binding site" evidence="6">
    <location>
        <position position="626"/>
    </location>
    <ligand>
        <name>ATP</name>
        <dbReference type="ChEBI" id="CHEBI:30616"/>
    </ligand>
</feature>
<feature type="binding site" evidence="2">
    <location>
        <position position="627"/>
    </location>
    <ligand>
        <name>ATP</name>
        <dbReference type="ChEBI" id="CHEBI:30616"/>
    </ligand>
</feature>
<feature type="binding site" evidence="6">
    <location>
        <position position="627"/>
    </location>
    <ligand>
        <name>Mg(2+)</name>
        <dbReference type="ChEBI" id="CHEBI:18420"/>
    </ligand>
</feature>
<feature type="binding site" evidence="2">
    <location>
        <position position="720"/>
    </location>
    <ligand>
        <name>ATP</name>
        <dbReference type="ChEBI" id="CHEBI:30616"/>
    </ligand>
</feature>
<feature type="binding site" evidence="6">
    <location>
        <position position="761"/>
    </location>
    <ligand>
        <name>ATP</name>
        <dbReference type="ChEBI" id="CHEBI:30616"/>
    </ligand>
</feature>
<feature type="binding site" evidence="3">
    <location>
        <position position="763"/>
    </location>
    <ligand>
        <name>ATP</name>
        <dbReference type="ChEBI" id="CHEBI:30616"/>
    </ligand>
</feature>
<feature type="binding site" evidence="4">
    <location>
        <position position="766"/>
    </location>
    <ligand>
        <name>ATP</name>
        <dbReference type="ChEBI" id="CHEBI:30616"/>
    </ligand>
</feature>
<feature type="binding site" evidence="2">
    <location>
        <position position="784"/>
    </location>
    <ligand>
        <name>ATP</name>
        <dbReference type="ChEBI" id="CHEBI:30616"/>
    </ligand>
</feature>
<feature type="binding site" evidence="2">
    <location>
        <position position="817"/>
    </location>
    <ligand>
        <name>ATP</name>
        <dbReference type="ChEBI" id="CHEBI:30616"/>
    </ligand>
</feature>
<feature type="binding site" evidence="4">
    <location>
        <position position="818"/>
    </location>
    <ligand>
        <name>ATP</name>
        <dbReference type="ChEBI" id="CHEBI:30616"/>
    </ligand>
</feature>
<feature type="binding site" evidence="2">
    <location>
        <position position="898"/>
    </location>
    <ligand>
        <name>ATP</name>
        <dbReference type="ChEBI" id="CHEBI:30616"/>
    </ligand>
</feature>
<feature type="binding site" evidence="2">
    <location>
        <position position="899"/>
    </location>
    <ligand>
        <name>ATP</name>
        <dbReference type="ChEBI" id="CHEBI:30616"/>
    </ligand>
</feature>
<feature type="binding site" evidence="2">
    <location>
        <position position="900"/>
    </location>
    <ligand>
        <name>ATP</name>
        <dbReference type="ChEBI" id="CHEBI:30616"/>
    </ligand>
</feature>
<feature type="binding site" evidence="2">
    <location>
        <position position="991"/>
    </location>
    <ligand>
        <name>ATP</name>
        <dbReference type="ChEBI" id="CHEBI:30616"/>
    </ligand>
</feature>
<feature type="binding site" evidence="2">
    <location>
        <position position="997"/>
    </location>
    <ligand>
        <name>ATP</name>
        <dbReference type="ChEBI" id="CHEBI:30616"/>
    </ligand>
</feature>
<feature type="binding site" evidence="6">
    <location>
        <position position="1018"/>
    </location>
    <ligand>
        <name>Mg(2+)</name>
        <dbReference type="ChEBI" id="CHEBI:18420"/>
    </ligand>
</feature>
<feature type="binding site" evidence="6">
    <location>
        <position position="1021"/>
    </location>
    <ligand>
        <name>ATP</name>
        <dbReference type="ChEBI" id="CHEBI:30616"/>
    </ligand>
</feature>
<feature type="binding site" evidence="2">
    <location>
        <position position="1022"/>
    </location>
    <ligand>
        <name>ATP</name>
        <dbReference type="ChEBI" id="CHEBI:30616"/>
    </ligand>
</feature>
<feature type="binding site" evidence="5">
    <location>
        <position position="1022"/>
    </location>
    <ligand>
        <name>Mg(2+)</name>
        <dbReference type="ChEBI" id="CHEBI:18420"/>
    </ligand>
</feature>
<feature type="binding site" evidence="4">
    <location>
        <position position="1212"/>
    </location>
    <ligand>
        <name>a 1,2-diacyl-sn-glycero-3-phospho-(1D-myo-inositol 4-phosphate)</name>
        <dbReference type="ChEBI" id="CHEBI:58178"/>
    </ligand>
</feature>
<feature type="binding site" evidence="4">
    <location>
        <position position="1282"/>
    </location>
    <ligand>
        <name>a 1,2-diacyl-sn-glycero-3-phospho-(1D-myo-inositol 4-phosphate)</name>
        <dbReference type="ChEBI" id="CHEBI:58178"/>
    </ligand>
</feature>
<feature type="binding site" evidence="4">
    <location>
        <position position="1286"/>
    </location>
    <ligand>
        <name>a 1,2-diacyl-sn-glycero-3-phospho-(1D-myo-inositol 4-phosphate)</name>
        <dbReference type="ChEBI" id="CHEBI:58178"/>
    </ligand>
</feature>
<feature type="binding site" evidence="4">
    <location>
        <position position="1287"/>
    </location>
    <ligand>
        <name>a 1,2-diacyl-sn-glycero-3-phospho-(1D-myo-inositol 4-phosphate)</name>
        <dbReference type="ChEBI" id="CHEBI:58178"/>
    </ligand>
</feature>
<feature type="binding site" evidence="4">
    <location>
        <position position="1298"/>
    </location>
    <ligand>
        <name>a 1,2-diacyl-sn-glycero-3-phospho-(1D-myo-inositol 4-phosphate)</name>
        <dbReference type="ChEBI" id="CHEBI:58178"/>
    </ligand>
</feature>
<feature type="binding site" evidence="4">
    <location>
        <position position="1299"/>
    </location>
    <ligand>
        <name>a 1,2-diacyl-sn-glycero-3-phospho-(1D-myo-inositol 4-phosphate)</name>
        <dbReference type="ChEBI" id="CHEBI:58178"/>
    </ligand>
</feature>
<feature type="site" description="Involved in the release of the transported lipid into the cytosolic leaflet" evidence="1">
    <location>
        <position position="573"/>
    </location>
</feature>
<feature type="glycosylation site" description="N-linked (GlcNAc...) asparagine" evidence="8">
    <location>
        <position position="339"/>
    </location>
</feature>
<feature type="glycosylation site" description="N-linked (GlcNAc...) asparagine" evidence="8">
    <location>
        <position position="433"/>
    </location>
</feature>
<feature type="glycosylation site" description="N-linked (GlcNAc...) asparagine" evidence="8">
    <location>
        <position position="490"/>
    </location>
</feature>
<feature type="glycosylation site" description="N-linked (GlcNAc...) asparagine" evidence="8">
    <location>
        <position position="679"/>
    </location>
</feature>
<feature type="glycosylation site" description="N-linked (GlcNAc...) asparagine" evidence="8">
    <location>
        <position position="762"/>
    </location>
</feature>
<feature type="glycosylation site" description="N-linked (GlcNAc...) asparagine" evidence="8">
    <location>
        <position position="1083"/>
    </location>
</feature>
<gene>
    <name type="primary">DRS2</name>
    <name evidence="13" type="ORF">VDAG_06574</name>
</gene>
<accession>G2X7W6</accession>
<comment type="function">
    <text evidence="4 10">Catalytic component of a P4-ATPase flippase complex which catalyzes the hydrolysis of ATP coupled to the transport of phosphatidylserine and small amounts of ethanolamine from the lumen to the cytosolic leaflet of the trans-Golgi network and cell membrane and ensures the maintenance of asymmetric distribution of phospholipids (By similarity). Required for efficient vesicle transport during toxin secretion (PubMed:36072318).</text>
</comment>
<comment type="catalytic activity">
    <reaction evidence="4">
        <text>ATP + H2O + phospholipidSide 1 = ADP + phosphate + phospholipidSide 2.</text>
        <dbReference type="EC" id="7.6.2.1"/>
    </reaction>
</comment>
<comment type="catalytic activity">
    <reaction evidence="4">
        <text>a 1,2-diacyl-sn-glycero-3-phospho-L-serine(out) + ATP + H2O = a 1,2-diacyl-sn-glycero-3-phospho-L-serine(in) + ADP + phosphate + H(+)</text>
        <dbReference type="Rhea" id="RHEA:38567"/>
        <dbReference type="ChEBI" id="CHEBI:15377"/>
        <dbReference type="ChEBI" id="CHEBI:15378"/>
        <dbReference type="ChEBI" id="CHEBI:30616"/>
        <dbReference type="ChEBI" id="CHEBI:43474"/>
        <dbReference type="ChEBI" id="CHEBI:57262"/>
        <dbReference type="ChEBI" id="CHEBI:456216"/>
    </reaction>
    <physiologicalReaction direction="left-to-right" evidence="4">
        <dbReference type="Rhea" id="RHEA:38568"/>
    </physiologicalReaction>
</comment>
<comment type="catalytic activity">
    <reaction evidence="4">
        <text>a 1,2-diacyl-sn-glycero-3-phosphoethanolamine(out) + ATP + H2O = a 1,2-diacyl-sn-glycero-3-phosphoethanolamine(in) + ADP + phosphate + H(+)</text>
        <dbReference type="Rhea" id="RHEA:66132"/>
        <dbReference type="ChEBI" id="CHEBI:15377"/>
        <dbReference type="ChEBI" id="CHEBI:15378"/>
        <dbReference type="ChEBI" id="CHEBI:30616"/>
        <dbReference type="ChEBI" id="CHEBI:43474"/>
        <dbReference type="ChEBI" id="CHEBI:64612"/>
        <dbReference type="ChEBI" id="CHEBI:456216"/>
    </reaction>
    <physiologicalReaction direction="left-to-right" evidence="4">
        <dbReference type="Rhea" id="RHEA:66133"/>
    </physiologicalReaction>
</comment>
<comment type="cofactor">
    <cofactor evidence="4">
        <name>Mg(2+)</name>
        <dbReference type="ChEBI" id="CHEBI:18420"/>
    </cofactor>
</comment>
<comment type="subcellular location">
    <subcellularLocation>
        <location evidence="10">Cell membrane</location>
        <topology evidence="7">Multi-pass membrane protein</topology>
    </subcellularLocation>
    <subcellularLocation>
        <location evidence="10">Golgi apparatus</location>
        <location evidence="10">trans-Golgi network membrane</location>
        <topology evidence="7">Multi-pass membrane protein</topology>
    </subcellularLocation>
</comment>
<comment type="disruption phenotype">
    <text evidence="10">Reduces the amount of toxins sulfacetamide (SFA) and fumonisin B1 (FB1) secreted from cells (PubMed:36072318). Decreases cell population growth, conidia formation, conidial germination rate (PubMed:36072318). Abolishes microsclerotia formation and severely disrupts melanin production (PubMed:36072318). Decreases virulence in cotton and thale cress (PubMed:36072318).</text>
</comment>
<comment type="similarity">
    <text evidence="12">Belongs to the cation transport ATPase (P-type) (TC 3.A.3) family. Type IV subfamily.</text>
</comment>
<organism evidence="14">
    <name type="scientific">Verticillium dahliae (strain VdLs.17 / ATCC MYA-4575 / FGSC 10137)</name>
    <name type="common">Verticillium wilt</name>
    <dbReference type="NCBI Taxonomy" id="498257"/>
    <lineage>
        <taxon>Eukaryota</taxon>
        <taxon>Fungi</taxon>
        <taxon>Dikarya</taxon>
        <taxon>Ascomycota</taxon>
        <taxon>Pezizomycotina</taxon>
        <taxon>Sordariomycetes</taxon>
        <taxon>Hypocreomycetidae</taxon>
        <taxon>Glomerellales</taxon>
        <taxon>Plectosphaerellaceae</taxon>
        <taxon>Verticillium</taxon>
    </lineage>
</organism>